<sequence>YIELAVVADHGMFTKYNSNVNTIRTWVHEMVNSLNGFFRSMXVDDASLVNLEVWSKTLTSFGEWRDLLPRISHDHAQLLTTIVFDQQTIGIAYTAGMCDPSQSVAVVMDHVAVTMAHELGHNLGMDHDDTCTCGAKSCIMASTISKGLSFEFSDCSQNQYQTYVTKHNPQCILNK</sequence>
<accession>C0HJU2</accession>
<feature type="chain" id="PRO_0000433783" description="Snake venom metalloproteinase BpMP-1">
    <location>
        <begin position="1"/>
        <end position="175"/>
    </location>
</feature>
<feature type="domain" description="Peptidase M12B" evidence="2">
    <location>
        <begin position="1"/>
        <end position="175" status="greater than"/>
    </location>
</feature>
<feature type="active site" evidence="2 3">
    <location>
        <position position="118"/>
    </location>
</feature>
<feature type="binding site" evidence="1">
    <location>
        <position position="3"/>
    </location>
    <ligand>
        <name>Ca(2+)</name>
        <dbReference type="ChEBI" id="CHEBI:29108"/>
    </ligand>
</feature>
<feature type="binding site" evidence="1">
    <location>
        <position position="74"/>
    </location>
    <ligand>
        <name>Ca(2+)</name>
        <dbReference type="ChEBI" id="CHEBI:29108"/>
    </ligand>
</feature>
<feature type="binding site" evidence="1">
    <location>
        <position position="117"/>
    </location>
    <ligand>
        <name>Zn(2+)</name>
        <dbReference type="ChEBI" id="CHEBI:29105"/>
        <note>catalytic</note>
    </ligand>
</feature>
<feature type="binding site" evidence="1">
    <location>
        <position position="121"/>
    </location>
    <ligand>
        <name>Zn(2+)</name>
        <dbReference type="ChEBI" id="CHEBI:29105"/>
        <note>catalytic</note>
    </ligand>
</feature>
<feature type="binding site" evidence="1">
    <location>
        <position position="127"/>
    </location>
    <ligand>
        <name>Zn(2+)</name>
        <dbReference type="ChEBI" id="CHEBI:29105"/>
        <note>catalytic</note>
    </ligand>
</feature>
<feature type="binding site" evidence="1">
    <location>
        <position position="171"/>
    </location>
    <ligand>
        <name>Ca(2+)</name>
        <dbReference type="ChEBI" id="CHEBI:29108"/>
    </ligand>
</feature>
<feature type="binding site" evidence="1">
    <location>
        <position position="174"/>
    </location>
    <ligand>
        <name>Ca(2+)</name>
        <dbReference type="ChEBI" id="CHEBI:29108"/>
    </ligand>
</feature>
<feature type="disulfide bond" evidence="2">
    <location>
        <begin position="98"/>
        <end position="171"/>
    </location>
</feature>
<feature type="disulfide bond" evidence="2">
    <location>
        <begin position="131"/>
        <end position="155"/>
    </location>
</feature>
<feature type="disulfide bond" evidence="2">
    <location>
        <begin position="133"/>
        <end position="138"/>
    </location>
</feature>
<feature type="non-consecutive residues" evidence="7">
    <location>
        <begin position="56"/>
        <end position="57"/>
    </location>
</feature>
<feature type="non-terminal residue" evidence="7">
    <location>
        <position position="1"/>
    </location>
</feature>
<feature type="non-terminal residue" evidence="7">
    <location>
        <position position="175"/>
    </location>
</feature>
<protein>
    <recommendedName>
        <fullName evidence="5">Snake venom metalloproteinase BpMP-1</fullName>
        <shortName evidence="5">SVMP</shortName>
        <ecNumber evidence="4">3.4.24.-</ecNumber>
    </recommendedName>
    <alternativeName>
        <fullName evidence="5">Fibrinogenolytic metalloproteinase</fullName>
    </alternativeName>
</protein>
<reference evidence="6" key="1">
    <citation type="journal article" date="2012" name="Comp. Biochem. Physiol.">
        <title>Biochemical and enzymatic characterization of BpMP-I, a fibrinogenolytic metalloproteinase isolated from Bothropoides pauloensis snake venom.</title>
        <authorList>
            <person name="Naves de Souza D.L."/>
            <person name="Gomes M.S."/>
            <person name="Ferreira F.B."/>
            <person name="Rodrigues R.S."/>
            <person name="Ache D.C."/>
            <person name="Richardson M."/>
            <person name="Borges M.H."/>
            <person name="Rodrigues V.M."/>
        </authorList>
    </citation>
    <scope>PROTEIN SEQUENCE</scope>
    <scope>FUNCTION</scope>
    <scope>COFACTOR</scope>
    <scope>ACTIVITY REGULATION</scope>
    <scope>BIOPHYSICOCHEMICAL PROPERTIES</scope>
    <scope>SUBUNIT</scope>
    <scope>SUBCELLULAR LOCATION</scope>
    <source>
        <tissue evidence="5">Venom</tissue>
    </source>
</reference>
<organism>
    <name type="scientific">Bothrops pauloensis</name>
    <name type="common">Neuwied's lancehead</name>
    <name type="synonym">Bothrops neuwiedi pauloensis</name>
    <dbReference type="NCBI Taxonomy" id="1042543"/>
    <lineage>
        <taxon>Eukaryota</taxon>
        <taxon>Metazoa</taxon>
        <taxon>Chordata</taxon>
        <taxon>Craniata</taxon>
        <taxon>Vertebrata</taxon>
        <taxon>Euteleostomi</taxon>
        <taxon>Lepidosauria</taxon>
        <taxon>Squamata</taxon>
        <taxon>Bifurcata</taxon>
        <taxon>Unidentata</taxon>
        <taxon>Episquamata</taxon>
        <taxon>Toxicofera</taxon>
        <taxon>Serpentes</taxon>
        <taxon>Colubroidea</taxon>
        <taxon>Viperidae</taxon>
        <taxon>Crotalinae</taxon>
        <taxon>Bothrops</taxon>
    </lineage>
</organism>
<name>VM11_BOTPA</name>
<keyword id="KW-0106">Calcium</keyword>
<keyword id="KW-0903">Direct protein sequencing</keyword>
<keyword id="KW-1015">Disulfide bond</keyword>
<keyword id="KW-1206">Fibrinogenolytic toxin</keyword>
<keyword id="KW-1199">Hemostasis impairing toxin</keyword>
<keyword id="KW-0378">Hydrolase</keyword>
<keyword id="KW-0479">Metal-binding</keyword>
<keyword id="KW-0482">Metalloprotease</keyword>
<keyword id="KW-0645">Protease</keyword>
<keyword id="KW-0964">Secreted</keyword>
<keyword id="KW-0800">Toxin</keyword>
<keyword id="KW-0862">Zinc</keyword>
<comment type="function">
    <text evidence="4">Non-hemorrhagic snake venom zinc metalloprotease that hydrolyzes the Aalpha-chain of fibrinogen, more slowly the Bbeta-chain and shows no effect on the gamma chain. Has no coagulant activity on bovine plasma and fibrinogen.</text>
</comment>
<comment type="cofactor">
    <cofactor evidence="4">
        <name>Zn(2+)</name>
        <dbReference type="ChEBI" id="CHEBI:29105"/>
    </cofactor>
    <text evidence="1">Binds 1 zinc ion per subunit.</text>
</comment>
<comment type="activity regulation">
    <text evidence="4">Inhibited by EDTA, 1,10-phenanthroline and beta-mercaptoethanol. Not inhibited by the serine protease inhibitors aprotinin and benzamidin.</text>
</comment>
<comment type="biophysicochemical properties">
    <phDependence>
        <text evidence="4">Highest activity at neutral to basic pH. Reduced activity at pH 3.0.</text>
    </phDependence>
    <temperatureDependence>
        <text evidence="4">Activity is highest at 4 degrees Celsius, decreases with increasing temperatures and is lost at 60 degrees Celsius.</text>
    </temperatureDependence>
</comment>
<comment type="subunit">
    <text evidence="4">Monomer.</text>
</comment>
<comment type="subcellular location">
    <subcellularLocation>
        <location evidence="4">Secreted</location>
    </subcellularLocation>
</comment>
<comment type="tissue specificity">
    <text evidence="7">Expressed by the venom gland.</text>
</comment>
<comment type="similarity">
    <text evidence="7">Belongs to the venom metalloproteinase (M12B) family. P-I subfamily.</text>
</comment>
<proteinExistence type="evidence at protein level"/>
<dbReference type="EC" id="3.4.24.-" evidence="4"/>
<dbReference type="GO" id="GO:0005576">
    <property type="term" value="C:extracellular region"/>
    <property type="evidence" value="ECO:0007669"/>
    <property type="project" value="UniProtKB-SubCell"/>
</dbReference>
<dbReference type="GO" id="GO:0005886">
    <property type="term" value="C:plasma membrane"/>
    <property type="evidence" value="ECO:0007669"/>
    <property type="project" value="TreeGrafter"/>
</dbReference>
<dbReference type="GO" id="GO:0046872">
    <property type="term" value="F:metal ion binding"/>
    <property type="evidence" value="ECO:0007669"/>
    <property type="project" value="UniProtKB-KW"/>
</dbReference>
<dbReference type="GO" id="GO:0004222">
    <property type="term" value="F:metalloendopeptidase activity"/>
    <property type="evidence" value="ECO:0007669"/>
    <property type="project" value="InterPro"/>
</dbReference>
<dbReference type="GO" id="GO:0090729">
    <property type="term" value="F:toxin activity"/>
    <property type="evidence" value="ECO:0007669"/>
    <property type="project" value="UniProtKB-KW"/>
</dbReference>
<dbReference type="GO" id="GO:0006508">
    <property type="term" value="P:proteolysis"/>
    <property type="evidence" value="ECO:0007669"/>
    <property type="project" value="UniProtKB-KW"/>
</dbReference>
<dbReference type="CDD" id="cd04269">
    <property type="entry name" value="ZnMc_adamalysin_II_like"/>
    <property type="match status" value="1"/>
</dbReference>
<dbReference type="FunFam" id="3.40.390.10:FF:000002">
    <property type="entry name" value="Disintegrin and metalloproteinase domain-containing protein 22"/>
    <property type="match status" value="1"/>
</dbReference>
<dbReference type="Gene3D" id="3.40.390.10">
    <property type="entry name" value="Collagenase (Catalytic Domain)"/>
    <property type="match status" value="1"/>
</dbReference>
<dbReference type="InterPro" id="IPR024079">
    <property type="entry name" value="MetalloPept_cat_dom_sf"/>
</dbReference>
<dbReference type="InterPro" id="IPR001590">
    <property type="entry name" value="Peptidase_M12B"/>
</dbReference>
<dbReference type="InterPro" id="IPR034027">
    <property type="entry name" value="Reprolysin_adamalysin"/>
</dbReference>
<dbReference type="PANTHER" id="PTHR11905">
    <property type="entry name" value="ADAM A DISINTEGRIN AND METALLOPROTEASE DOMAIN"/>
    <property type="match status" value="1"/>
</dbReference>
<dbReference type="PANTHER" id="PTHR11905:SF32">
    <property type="entry name" value="DISINTEGRIN AND METALLOPROTEINASE DOMAIN-CONTAINING PROTEIN 28"/>
    <property type="match status" value="1"/>
</dbReference>
<dbReference type="Pfam" id="PF01421">
    <property type="entry name" value="Reprolysin"/>
    <property type="match status" value="1"/>
</dbReference>
<dbReference type="SUPFAM" id="SSF55486">
    <property type="entry name" value="Metalloproteases ('zincins'), catalytic domain"/>
    <property type="match status" value="1"/>
</dbReference>
<dbReference type="PROSITE" id="PS50215">
    <property type="entry name" value="ADAM_MEPRO"/>
    <property type="match status" value="1"/>
</dbReference>
<dbReference type="PROSITE" id="PS00142">
    <property type="entry name" value="ZINC_PROTEASE"/>
    <property type="match status" value="1"/>
</dbReference>
<evidence type="ECO:0000250" key="1">
    <source>
        <dbReference type="UniProtKB" id="P85314"/>
    </source>
</evidence>
<evidence type="ECO:0000255" key="2">
    <source>
        <dbReference type="PROSITE-ProRule" id="PRU00276"/>
    </source>
</evidence>
<evidence type="ECO:0000255" key="3">
    <source>
        <dbReference type="PROSITE-ProRule" id="PRU10095"/>
    </source>
</evidence>
<evidence type="ECO:0000269" key="4">
    <source>
    </source>
</evidence>
<evidence type="ECO:0000303" key="5">
    <source>
    </source>
</evidence>
<evidence type="ECO:0000305" key="6"/>
<evidence type="ECO:0000305" key="7">
    <source>
    </source>
</evidence>